<comment type="function">
    <text evidence="6">May be involved in the regulation of gene expression responses of environment-sensing pathways.</text>
</comment>
<comment type="subunit">
    <text evidence="5">Transiently interacts with PEX14.</text>
</comment>
<comment type="subcellular location">
    <subcellularLocation>
        <location evidence="3">Cytoplasm</location>
    </subcellularLocation>
    <subcellularLocation>
        <location evidence="3">Nucleus</location>
    </subcellularLocation>
    <subcellularLocation>
        <location evidence="5">Peroxisome</location>
    </subcellularLocation>
    <text evidence="5">A fraction of the protein co-localizes with peroxisomes.</text>
</comment>
<comment type="miscellaneous">
    <text evidence="4">Present with 195 molecules/cell in log phase SD medium.</text>
</comment>
<dbReference type="EMBL" id="Z28321">
    <property type="protein sequence ID" value="CAA82176.1"/>
    <property type="molecule type" value="Genomic_DNA"/>
</dbReference>
<dbReference type="EMBL" id="BK006944">
    <property type="protein sequence ID" value="DAA09247.1"/>
    <property type="molecule type" value="Genomic_DNA"/>
</dbReference>
<dbReference type="PIR" id="S38174">
    <property type="entry name" value="S38174"/>
</dbReference>
<dbReference type="RefSeq" id="NP_013022.1">
    <property type="nucleotide sequence ID" value="NM_001179886.1"/>
</dbReference>
<dbReference type="SMR" id="P36168"/>
<dbReference type="BioGRID" id="34227">
    <property type="interactions" value="174"/>
</dbReference>
<dbReference type="DIP" id="DIP-1929N"/>
<dbReference type="FunCoup" id="P36168">
    <property type="interactions" value="175"/>
</dbReference>
<dbReference type="IntAct" id="P36168">
    <property type="interactions" value="7"/>
</dbReference>
<dbReference type="MINT" id="P36168"/>
<dbReference type="STRING" id="4932.YKR096W"/>
<dbReference type="GlyGen" id="P36168">
    <property type="glycosylation" value="1 site"/>
</dbReference>
<dbReference type="iPTMnet" id="P36168"/>
<dbReference type="PaxDb" id="4932-YKR096W"/>
<dbReference type="PeptideAtlas" id="P36168"/>
<dbReference type="EnsemblFungi" id="YKR096W_mRNA">
    <property type="protein sequence ID" value="YKR096W"/>
    <property type="gene ID" value="YKR096W"/>
</dbReference>
<dbReference type="GeneID" id="853971"/>
<dbReference type="KEGG" id="sce:YKR096W"/>
<dbReference type="AGR" id="SGD:S000001804"/>
<dbReference type="SGD" id="S000001804">
    <property type="gene designation" value="ESL2"/>
</dbReference>
<dbReference type="VEuPathDB" id="FungiDB:YKR096W"/>
<dbReference type="eggNOG" id="ENOG502QQKF">
    <property type="taxonomic scope" value="Eukaryota"/>
</dbReference>
<dbReference type="GeneTree" id="ENSGT00940000176784"/>
<dbReference type="HOGENOM" id="CLU_006407_0_0_1"/>
<dbReference type="InParanoid" id="P36168"/>
<dbReference type="OMA" id="PEVWKCW"/>
<dbReference type="OrthoDB" id="2017974at2759"/>
<dbReference type="BioCyc" id="YEAST:G3O-32059-MONOMER"/>
<dbReference type="Reactome" id="R-SCE-975957">
    <property type="pathway name" value="Nonsense Mediated Decay (NMD) enhanced by the Exon Junction Complex (EJC)"/>
</dbReference>
<dbReference type="BioGRID-ORCS" id="853971">
    <property type="hits" value="0 hits in 10 CRISPR screens"/>
</dbReference>
<dbReference type="PRO" id="PR:P36168"/>
<dbReference type="Proteomes" id="UP000002311">
    <property type="component" value="Chromosome XI"/>
</dbReference>
<dbReference type="RNAct" id="P36168">
    <property type="molecule type" value="protein"/>
</dbReference>
<dbReference type="GO" id="GO:0005737">
    <property type="term" value="C:cytoplasm"/>
    <property type="evidence" value="ECO:0007005"/>
    <property type="project" value="SGD"/>
</dbReference>
<dbReference type="GO" id="GO:0005634">
    <property type="term" value="C:nucleus"/>
    <property type="evidence" value="ECO:0007005"/>
    <property type="project" value="SGD"/>
</dbReference>
<dbReference type="GO" id="GO:0005777">
    <property type="term" value="C:peroxisome"/>
    <property type="evidence" value="ECO:0000314"/>
    <property type="project" value="SGD"/>
</dbReference>
<dbReference type="GO" id="GO:0005697">
    <property type="term" value="C:telomerase holoenzyme complex"/>
    <property type="evidence" value="ECO:0000318"/>
    <property type="project" value="GO_Central"/>
</dbReference>
<dbReference type="GO" id="GO:0070034">
    <property type="term" value="F:telomerase RNA binding"/>
    <property type="evidence" value="ECO:0000318"/>
    <property type="project" value="GO_Central"/>
</dbReference>
<dbReference type="GO" id="GO:0042162">
    <property type="term" value="F:telomeric DNA binding"/>
    <property type="evidence" value="ECO:0000318"/>
    <property type="project" value="GO_Central"/>
</dbReference>
<dbReference type="GO" id="GO:0000184">
    <property type="term" value="P:nuclear-transcribed mRNA catabolic process, nonsense-mediated decay"/>
    <property type="evidence" value="ECO:0000318"/>
    <property type="project" value="GO_Central"/>
</dbReference>
<dbReference type="FunFam" id="3.40.50.1010:FF:000086">
    <property type="entry name" value="YKR096W-like protein"/>
    <property type="match status" value="1"/>
</dbReference>
<dbReference type="Gene3D" id="3.40.50.1010">
    <property type="entry name" value="5'-nuclease"/>
    <property type="match status" value="1"/>
</dbReference>
<dbReference type="InterPro" id="IPR002716">
    <property type="entry name" value="PIN_dom"/>
</dbReference>
<dbReference type="InterPro" id="IPR011990">
    <property type="entry name" value="TPR-like_helical_dom_sf"/>
</dbReference>
<dbReference type="PANTHER" id="PTHR37458">
    <property type="entry name" value="THISBE"/>
    <property type="match status" value="1"/>
</dbReference>
<dbReference type="PANTHER" id="PTHR37458:SF1">
    <property type="entry name" value="THISBE"/>
    <property type="match status" value="1"/>
</dbReference>
<dbReference type="Pfam" id="PF13638">
    <property type="entry name" value="PIN_4"/>
    <property type="match status" value="1"/>
</dbReference>
<dbReference type="SMART" id="SM00670">
    <property type="entry name" value="PINc"/>
    <property type="match status" value="1"/>
</dbReference>
<dbReference type="SUPFAM" id="SSF48452">
    <property type="entry name" value="TPR-like"/>
    <property type="match status" value="1"/>
</dbReference>
<organism>
    <name type="scientific">Saccharomyces cerevisiae (strain ATCC 204508 / S288c)</name>
    <name type="common">Baker's yeast</name>
    <dbReference type="NCBI Taxonomy" id="559292"/>
    <lineage>
        <taxon>Eukaryota</taxon>
        <taxon>Fungi</taxon>
        <taxon>Dikarya</taxon>
        <taxon>Ascomycota</taxon>
        <taxon>Saccharomycotina</taxon>
        <taxon>Saccharomycetes</taxon>
        <taxon>Saccharomycetales</taxon>
        <taxon>Saccharomycetaceae</taxon>
        <taxon>Saccharomyces</taxon>
    </lineage>
</organism>
<feature type="chain" id="PRO_0000203229" description="EST/SMG-like protein 2">
    <location>
        <begin position="1"/>
        <end position="1195"/>
    </location>
</feature>
<feature type="domain" description="PINc" evidence="1">
    <location>
        <begin position="1025"/>
        <end position="1164"/>
    </location>
</feature>
<feature type="region of interest" description="Disordered" evidence="2">
    <location>
        <begin position="1"/>
        <end position="38"/>
    </location>
</feature>
<feature type="region of interest" description="Disordered" evidence="2">
    <location>
        <begin position="55"/>
        <end position="130"/>
    </location>
</feature>
<feature type="region of interest" description="Disordered" evidence="2">
    <location>
        <begin position="179"/>
        <end position="268"/>
    </location>
</feature>
<feature type="region of interest" description="Disordered" evidence="2">
    <location>
        <begin position="610"/>
        <end position="643"/>
    </location>
</feature>
<feature type="compositionally biased region" description="Polar residues" evidence="2">
    <location>
        <begin position="1"/>
        <end position="10"/>
    </location>
</feature>
<feature type="compositionally biased region" description="Polar residues" evidence="2">
    <location>
        <begin position="18"/>
        <end position="35"/>
    </location>
</feature>
<feature type="compositionally biased region" description="Polar residues" evidence="2">
    <location>
        <begin position="55"/>
        <end position="68"/>
    </location>
</feature>
<feature type="compositionally biased region" description="Basic and acidic residues" evidence="2">
    <location>
        <begin position="83"/>
        <end position="109"/>
    </location>
</feature>
<feature type="compositionally biased region" description="Basic and acidic residues" evidence="2">
    <location>
        <begin position="197"/>
        <end position="208"/>
    </location>
</feature>
<feature type="compositionally biased region" description="Low complexity" evidence="2">
    <location>
        <begin position="210"/>
        <end position="252"/>
    </location>
</feature>
<feature type="compositionally biased region" description="Low complexity" evidence="2">
    <location>
        <begin position="619"/>
        <end position="629"/>
    </location>
</feature>
<gene>
    <name evidence="7" type="primary">ESL2</name>
    <name evidence="8" type="ordered locus">YKR096W</name>
</gene>
<protein>
    <recommendedName>
        <fullName evidence="7">EST/SMG-like protein 2</fullName>
    </recommendedName>
</protein>
<evidence type="ECO:0000255" key="1"/>
<evidence type="ECO:0000256" key="2">
    <source>
        <dbReference type="SAM" id="MobiDB-lite"/>
    </source>
</evidence>
<evidence type="ECO:0000269" key="3">
    <source>
    </source>
</evidence>
<evidence type="ECO:0000269" key="4">
    <source>
    </source>
</evidence>
<evidence type="ECO:0000269" key="5">
    <source>
    </source>
</evidence>
<evidence type="ECO:0000269" key="6">
    <source>
    </source>
</evidence>
<evidence type="ECO:0000303" key="7">
    <source>
    </source>
</evidence>
<evidence type="ECO:0000312" key="8">
    <source>
        <dbReference type="SGD" id="S000001804"/>
    </source>
</evidence>
<sequence length="1195" mass="137491">MPETSVQNPLRLSENENTRSMFLSASQQQRPSATPSFPRLVRNTTANLSLSDFQVLNPSSKRQNSNSVYDDINSSKRRISRPRFSDIEGKNNDHTYPERTTVKESEKNPSPRYVSSSKRALKRENSVGITQSSALISKSFSENGGSIAHEKWSPENMIKPLNVSQNSLAFVDAGSDEQSKSEIVGGFQRKSNNSQEINDKDNSARDQDFNNSGNNNNNNNHSSNNNDNNNNNNDDNNNNNNSNSRDNNNNSDDSNEREENDSCKPASNKRSGIALIQKLQELYKVIVKQEIELQERCSQLTNSQTTELKSLWTIYKINTDLVNNYVTFITTALLPSQPPHDLVIGQEIVEIYRIERRLWVYGTITFLDVLKNFSNFMDPEVCCQFITHVFVSLSTMISDIPSKYSITWLQRLGDLSRMAIALYPSSFIDWKLSAEHWYTEAMKYIYNHGKLYYHMSTVQQNTLEAFVNLGKSVFCQETFTPSPQYMQLVIDNIYQRAFVERNNGNLRNSLLIEYLKHSEAMLLPSFLESPDLQNVVLSYFIEKFGIDANGCNIFNAEDMFVQNPDFFKYFFRHGPSFAQSHILQIVGFGEPKNPFAILFELPKYLKERKDKKERKKSSNNDSSVTESSTGNSRNDNEDDDEIMSSTTSISDHDLLAEFFNDIDTLRRPILPSMLTNEAWLETLKFLNMTSLKCGIIVLRKFLHGPLGIALPHILPWIYFIISICLKSSQLSDPVSKEFWMIIVKRAFPWDTMVTFMNVLIVYLLDNQTSNSIIGDLCDDYDKLSLSELLELFNEGEELPEILGCWGTLWFDTICEKNTHSISSEDNFQEIGIKDYMALDSPTDGIIFDEKDENGEKFWKRACRTIFLFRELSRSFPIGVIIRNDPLIYRSSFQNTNILGSLVFKLEPLCNIHNNIPVLGALESIIDISEARSENNTDLHAVPELSVNEGDNIFHYVGYKKLRADYTCFDKNGEFLSASLYTTWYVPNSNNTNIEDNINYNSEKENEGLFLECIKSDYPEIDFKTTYFVFDATSWLRHSARIFKLAQNRLLRFAICLTTFQELRFLRKSKDENVMEAATRGIITIRQLYYENKVLPLRFTGNVATHIEENLEFEEQITWRTHVDEFVIESVMKAQEKLESASEPRLSPRRFNYVVLISDDDAMKKKAEEKEIKTLSTRFVFSLCTKLGEQRHLCTD</sequence>
<reference key="1">
    <citation type="journal article" date="1994" name="Nature">
        <title>Complete DNA sequence of yeast chromosome XI.</title>
        <authorList>
            <person name="Dujon B."/>
            <person name="Alexandraki D."/>
            <person name="Andre B."/>
            <person name="Ansorge W."/>
            <person name="Baladron V."/>
            <person name="Ballesta J.P.G."/>
            <person name="Banrevi A."/>
            <person name="Bolle P.-A."/>
            <person name="Bolotin-Fukuhara M."/>
            <person name="Bossier P."/>
            <person name="Bou G."/>
            <person name="Boyer J."/>
            <person name="Buitrago M.J."/>
            <person name="Cheret G."/>
            <person name="Colleaux L."/>
            <person name="Daignan-Fornier B."/>
            <person name="del Rey F."/>
            <person name="Dion C."/>
            <person name="Domdey H."/>
            <person name="Duesterhoeft A."/>
            <person name="Duesterhus S."/>
            <person name="Entian K.-D."/>
            <person name="Erfle H."/>
            <person name="Esteban P.F."/>
            <person name="Feldmann H."/>
            <person name="Fernandes L."/>
            <person name="Fobo G.M."/>
            <person name="Fritz C."/>
            <person name="Fukuhara H."/>
            <person name="Gabel C."/>
            <person name="Gaillon L."/>
            <person name="Garcia-Cantalejo J.M."/>
            <person name="Garcia-Ramirez J.J."/>
            <person name="Gent M.E."/>
            <person name="Ghazvini M."/>
            <person name="Goffeau A."/>
            <person name="Gonzalez A."/>
            <person name="Grothues D."/>
            <person name="Guerreiro P."/>
            <person name="Hegemann J.H."/>
            <person name="Hewitt N."/>
            <person name="Hilger F."/>
            <person name="Hollenberg C.P."/>
            <person name="Horaitis O."/>
            <person name="Indge K.J."/>
            <person name="Jacquier A."/>
            <person name="James C.M."/>
            <person name="Jauniaux J.-C."/>
            <person name="Jimenez A."/>
            <person name="Keuchel H."/>
            <person name="Kirchrath L."/>
            <person name="Kleine K."/>
            <person name="Koetter P."/>
            <person name="Legrain P."/>
            <person name="Liebl S."/>
            <person name="Louis E.J."/>
            <person name="Maia e Silva A."/>
            <person name="Marck C."/>
            <person name="Monnier A.-L."/>
            <person name="Moestl D."/>
            <person name="Mueller S."/>
            <person name="Obermaier B."/>
            <person name="Oliver S.G."/>
            <person name="Pallier C."/>
            <person name="Pascolo S."/>
            <person name="Pfeiffer F."/>
            <person name="Philippsen P."/>
            <person name="Planta R.J."/>
            <person name="Pohl F.M."/>
            <person name="Pohl T.M."/>
            <person name="Poehlmann R."/>
            <person name="Portetelle D."/>
            <person name="Purnelle B."/>
            <person name="Puzos V."/>
            <person name="Ramezani Rad M."/>
            <person name="Rasmussen S.W."/>
            <person name="Remacha M.A."/>
            <person name="Revuelta J.L."/>
            <person name="Richard G.-F."/>
            <person name="Rieger M."/>
            <person name="Rodrigues-Pousada C."/>
            <person name="Rose M."/>
            <person name="Rupp T."/>
            <person name="Santos M.A."/>
            <person name="Schwager C."/>
            <person name="Sensen C."/>
            <person name="Skala J."/>
            <person name="Soares H."/>
            <person name="Sor F."/>
            <person name="Stegemann J."/>
            <person name="Tettelin H."/>
            <person name="Thierry A."/>
            <person name="Tzermia M."/>
            <person name="Urrestarazu L.A."/>
            <person name="van Dyck L."/>
            <person name="van Vliet-Reedijk J.C."/>
            <person name="Valens M."/>
            <person name="Vandenbol M."/>
            <person name="Vilela C."/>
            <person name="Vissers S."/>
            <person name="von Wettstein D."/>
            <person name="Voss H."/>
            <person name="Wiemann S."/>
            <person name="Xu G."/>
            <person name="Zimmermann J."/>
            <person name="Haasemann M."/>
            <person name="Becker I."/>
            <person name="Mewes H.-W."/>
        </authorList>
    </citation>
    <scope>NUCLEOTIDE SEQUENCE [LARGE SCALE GENOMIC DNA]</scope>
    <source>
        <strain>ATCC 204508 / S288c</strain>
    </source>
</reference>
<reference key="2">
    <citation type="journal article" date="2014" name="G3 (Bethesda)">
        <title>The reference genome sequence of Saccharomyces cerevisiae: Then and now.</title>
        <authorList>
            <person name="Engel S.R."/>
            <person name="Dietrich F.S."/>
            <person name="Fisk D.G."/>
            <person name="Binkley G."/>
            <person name="Balakrishnan R."/>
            <person name="Costanzo M.C."/>
            <person name="Dwight S.S."/>
            <person name="Hitz B.C."/>
            <person name="Karra K."/>
            <person name="Nash R.S."/>
            <person name="Weng S."/>
            <person name="Wong E.D."/>
            <person name="Lloyd P."/>
            <person name="Skrzypek M.S."/>
            <person name="Miyasato S.R."/>
            <person name="Simison M."/>
            <person name="Cherry J.M."/>
        </authorList>
    </citation>
    <scope>GENOME REANNOTATION</scope>
    <source>
        <strain>ATCC 204508 / S288c</strain>
    </source>
</reference>
<reference key="3">
    <citation type="journal article" date="2003" name="Nature">
        <title>Global analysis of protein localization in budding yeast.</title>
        <authorList>
            <person name="Huh W.-K."/>
            <person name="Falvo J.V."/>
            <person name="Gerke L.C."/>
            <person name="Carroll A.S."/>
            <person name="Howson R.W."/>
            <person name="Weissman J.S."/>
            <person name="O'Shea E.K."/>
        </authorList>
    </citation>
    <scope>SUBCELLULAR LOCATION [LARGE SCALE ANALYSIS]</scope>
</reference>
<reference key="4">
    <citation type="journal article" date="2003" name="Nature">
        <title>Global analysis of protein expression in yeast.</title>
        <authorList>
            <person name="Ghaemmaghami S."/>
            <person name="Huh W.-K."/>
            <person name="Bower K."/>
            <person name="Howson R.W."/>
            <person name="Belle A."/>
            <person name="Dephoure N."/>
            <person name="O'Shea E.K."/>
            <person name="Weissman J.S."/>
        </authorList>
    </citation>
    <scope>LEVEL OF PROTEIN EXPRESSION [LARGE SCALE ANALYSIS]</scope>
</reference>
<reference key="5">
    <citation type="journal article" date="2008" name="Mol. Cell. Proteomics">
        <title>A multidimensional chromatography technology for in-depth phosphoproteome analysis.</title>
        <authorList>
            <person name="Albuquerque C.P."/>
            <person name="Smolka M.B."/>
            <person name="Payne S.H."/>
            <person name="Bafna V."/>
            <person name="Eng J."/>
            <person name="Zhou H."/>
        </authorList>
    </citation>
    <scope>IDENTIFICATION BY MASS SPECTROMETRY [LARGE SCALE ANALYSIS]</scope>
</reference>
<reference key="6">
    <citation type="journal article" date="2012" name="J. Proteome Res.">
        <title>Identification of core components and transient interactors of the peroxisomal importomer by dual-track stable isotope labeling with amino acids in cell culture analysis.</title>
        <authorList>
            <person name="Oeljeklaus S."/>
            <person name="Reinartz B.S."/>
            <person name="Wolf J."/>
            <person name="Wiese S."/>
            <person name="Tonillo J."/>
            <person name="Podwojski K."/>
            <person name="Kuhlmann K."/>
            <person name="Stephan C."/>
            <person name="Meyer H.E."/>
            <person name="Schliebs W."/>
            <person name="Brocard C."/>
            <person name="Erdmann R."/>
            <person name="Warscheid B."/>
        </authorList>
    </citation>
    <scope>SUBUNIT</scope>
    <scope>SUBCELLULAR LOCATION</scope>
</reference>
<reference key="7">
    <citation type="journal article" date="2013" name="G3 (Bethesda)">
        <title>Yeast hEST1A/B (SMG5/6)-like proteins contribute to environment-sensing adaptive gene expression responses.</title>
        <authorList>
            <person name="Lai X."/>
            <person name="Beilharz T."/>
            <person name="Au W.C."/>
            <person name="Hammet A."/>
            <person name="Preiss T."/>
            <person name="Basrai M.A."/>
            <person name="Heierhorst J."/>
        </authorList>
    </citation>
    <scope>FUNCTION</scope>
</reference>
<accession>P36168</accession>
<accession>D6VXF7</accession>
<name>ESL2_YEAST</name>
<keyword id="KW-0963">Cytoplasm</keyword>
<keyword id="KW-0539">Nucleus</keyword>
<keyword id="KW-0576">Peroxisome</keyword>
<keyword id="KW-1185">Reference proteome</keyword>
<proteinExistence type="evidence at protein level"/>